<protein>
    <recommendedName>
        <fullName>Fatty acid synthase subunit alpha</fullName>
        <ecNumber>2.3.1.86</ecNumber>
    </recommendedName>
    <domain>
        <recommendedName>
            <fullName>Acyl carrier</fullName>
        </recommendedName>
    </domain>
    <domain>
        <recommendedName>
            <fullName>3-oxoacyl-[acyl-carrier-protein] reductase</fullName>
            <ecNumber>1.1.1.100</ecNumber>
        </recommendedName>
        <alternativeName>
            <fullName>Beta-ketoacyl reductase</fullName>
        </alternativeName>
    </domain>
    <domain>
        <recommendedName>
            <fullName>3-oxoacyl-[acyl-carrier-protein] synthase</fullName>
            <ecNumber>2.3.1.41</ecNumber>
        </recommendedName>
        <alternativeName>
            <fullName>Beta-ketoacyl synthase</fullName>
        </alternativeName>
    </domain>
</protein>
<dbReference type="EC" id="2.3.1.86"/>
<dbReference type="EC" id="1.1.1.100"/>
<dbReference type="EC" id="2.3.1.41"/>
<dbReference type="EMBL" id="L29063">
    <property type="protein sequence ID" value="AAA34345.1"/>
    <property type="molecule type" value="Genomic_DNA"/>
</dbReference>
<dbReference type="PIR" id="JC4086">
    <property type="entry name" value="JC4086"/>
</dbReference>
<dbReference type="PDB" id="6U5V">
    <property type="method" value="EM"/>
    <property type="resolution" value="2.80 A"/>
    <property type="chains" value="A=1-1885"/>
</dbReference>
<dbReference type="PDB" id="6U5W">
    <property type="method" value="EM"/>
    <property type="resolution" value="3.30 A"/>
    <property type="chains" value="A=1-1885"/>
</dbReference>
<dbReference type="PDB" id="7TUI">
    <property type="method" value="EM"/>
    <property type="resolution" value="2.66 A"/>
    <property type="chains" value="A=1-1885"/>
</dbReference>
<dbReference type="PDBsum" id="6U5V"/>
<dbReference type="PDBsum" id="6U5W"/>
<dbReference type="PDBsum" id="7TUI"/>
<dbReference type="EMDB" id="EMD-20657"/>
<dbReference type="EMDB" id="EMD-20658"/>
<dbReference type="EMDB" id="EMD-26132"/>
<dbReference type="SMR" id="P43098"/>
<dbReference type="VEuPathDB" id="FungiDB:C3_04830C_A"/>
<dbReference type="VEuPathDB" id="FungiDB:CAWG_02796"/>
<dbReference type="PHI-base" id="PHI:96"/>
<dbReference type="GO" id="GO:0005835">
    <property type="term" value="C:fatty acid synthase complex"/>
    <property type="evidence" value="ECO:0007669"/>
    <property type="project" value="EnsemblFungi"/>
</dbReference>
<dbReference type="GO" id="GO:0004316">
    <property type="term" value="F:3-oxoacyl-[acyl-carrier-protein] reductase (NADPH) activity"/>
    <property type="evidence" value="ECO:0007669"/>
    <property type="project" value="UniProtKB-EC"/>
</dbReference>
<dbReference type="GO" id="GO:0004315">
    <property type="term" value="F:3-oxoacyl-[acyl-carrier-protein] synthase activity"/>
    <property type="evidence" value="ECO:0007669"/>
    <property type="project" value="UniProtKB-EC"/>
</dbReference>
<dbReference type="GO" id="GO:0004312">
    <property type="term" value="F:fatty acid synthase activity"/>
    <property type="evidence" value="ECO:0007669"/>
    <property type="project" value="EnsemblFungi"/>
</dbReference>
<dbReference type="GO" id="GO:0004321">
    <property type="term" value="F:fatty-acyl-CoA synthase activity"/>
    <property type="evidence" value="ECO:0007669"/>
    <property type="project" value="UniProtKB-EC"/>
</dbReference>
<dbReference type="GO" id="GO:0008897">
    <property type="term" value="F:holo-[acyl-carrier-protein] synthase activity"/>
    <property type="evidence" value="ECO:0007669"/>
    <property type="project" value="InterPro"/>
</dbReference>
<dbReference type="GO" id="GO:0000287">
    <property type="term" value="F:magnesium ion binding"/>
    <property type="evidence" value="ECO:0007669"/>
    <property type="project" value="InterPro"/>
</dbReference>
<dbReference type="GO" id="GO:0101026">
    <property type="term" value="P:mitotic nuclear membrane biogenesis"/>
    <property type="evidence" value="ECO:0007669"/>
    <property type="project" value="EnsemblFungi"/>
</dbReference>
<dbReference type="GO" id="GO:1900535">
    <property type="term" value="P:palmitic acid biosynthetic process"/>
    <property type="evidence" value="ECO:0007669"/>
    <property type="project" value="EnsemblFungi"/>
</dbReference>
<dbReference type="CDD" id="cd00828">
    <property type="entry name" value="elong_cond_enzymes"/>
    <property type="match status" value="1"/>
</dbReference>
<dbReference type="CDD" id="cd08950">
    <property type="entry name" value="KR_fFAS_SDR_c_like"/>
    <property type="match status" value="1"/>
</dbReference>
<dbReference type="FunFam" id="3.90.470.20:FF:000005">
    <property type="entry name" value="Fatty acid synthase alpha subunit FasA"/>
    <property type="match status" value="1"/>
</dbReference>
<dbReference type="FunFam" id="3.30.70.2490:FF:000001">
    <property type="entry name" value="Fatty acid synthase subunit alpha"/>
    <property type="match status" value="1"/>
</dbReference>
<dbReference type="FunFam" id="3.90.25.70:FF:000001">
    <property type="entry name" value="Fatty acid synthase subunit alpha"/>
    <property type="match status" value="1"/>
</dbReference>
<dbReference type="Gene3D" id="3.30.70.2490">
    <property type="match status" value="1"/>
</dbReference>
<dbReference type="Gene3D" id="3.40.47.10">
    <property type="match status" value="1"/>
</dbReference>
<dbReference type="Gene3D" id="3.90.25.70">
    <property type="match status" value="1"/>
</dbReference>
<dbReference type="Gene3D" id="6.10.140.1410">
    <property type="match status" value="1"/>
</dbReference>
<dbReference type="Gene3D" id="6.10.250.1930">
    <property type="match status" value="1"/>
</dbReference>
<dbReference type="Gene3D" id="3.90.470.20">
    <property type="entry name" value="4'-phosphopantetheinyl transferase domain"/>
    <property type="match status" value="1"/>
</dbReference>
<dbReference type="Gene3D" id="3.40.50.720">
    <property type="entry name" value="NAD(P)-binding Rossmann-like Domain"/>
    <property type="match status" value="1"/>
</dbReference>
<dbReference type="HAMAP" id="MF_00101">
    <property type="entry name" value="AcpS"/>
    <property type="match status" value="1"/>
</dbReference>
<dbReference type="InterPro" id="IPR008278">
    <property type="entry name" value="4-PPantetheinyl_Trfase_dom"/>
</dbReference>
<dbReference type="InterPro" id="IPR037143">
    <property type="entry name" value="4-PPantetheinyl_Trfase_dom_sf"/>
</dbReference>
<dbReference type="InterPro" id="IPR002582">
    <property type="entry name" value="ACPS"/>
</dbReference>
<dbReference type="InterPro" id="IPR016035">
    <property type="entry name" value="Acyl_Trfase/lysoPLipase"/>
</dbReference>
<dbReference type="InterPro" id="IPR040899">
    <property type="entry name" value="Fas_alpha_ACP"/>
</dbReference>
<dbReference type="InterPro" id="IPR047224">
    <property type="entry name" value="FAS_alpha_su_C"/>
</dbReference>
<dbReference type="InterPro" id="IPR026025">
    <property type="entry name" value="FAS_alpha_yeast"/>
</dbReference>
<dbReference type="InterPro" id="IPR041550">
    <property type="entry name" value="FASI_helical"/>
</dbReference>
<dbReference type="InterPro" id="IPR050830">
    <property type="entry name" value="Fungal_FAS"/>
</dbReference>
<dbReference type="InterPro" id="IPR018201">
    <property type="entry name" value="Ketoacyl_synth_AS"/>
</dbReference>
<dbReference type="InterPro" id="IPR014031">
    <property type="entry name" value="Ketoacyl_synth_C"/>
</dbReference>
<dbReference type="InterPro" id="IPR014030">
    <property type="entry name" value="Ketoacyl_synth_N"/>
</dbReference>
<dbReference type="InterPro" id="IPR036291">
    <property type="entry name" value="NAD(P)-bd_dom_sf"/>
</dbReference>
<dbReference type="InterPro" id="IPR020841">
    <property type="entry name" value="PKS_Beta-ketoAc_synthase_dom"/>
</dbReference>
<dbReference type="InterPro" id="IPR009081">
    <property type="entry name" value="PP-bd_ACP"/>
</dbReference>
<dbReference type="InterPro" id="IPR004568">
    <property type="entry name" value="Ppantetheine-prot_Trfase_dom"/>
</dbReference>
<dbReference type="InterPro" id="IPR016039">
    <property type="entry name" value="Thiolase-like"/>
</dbReference>
<dbReference type="NCBIfam" id="TIGR00556">
    <property type="entry name" value="pantethn_trn"/>
    <property type="match status" value="1"/>
</dbReference>
<dbReference type="PANTHER" id="PTHR10982:SF21">
    <property type="entry name" value="FATTY ACID SYNTHASE SUBUNIT BETA"/>
    <property type="match status" value="1"/>
</dbReference>
<dbReference type="PANTHER" id="PTHR10982">
    <property type="entry name" value="MALONYL COA-ACYL CARRIER PROTEIN TRANSACYLASE"/>
    <property type="match status" value="1"/>
</dbReference>
<dbReference type="Pfam" id="PF01648">
    <property type="entry name" value="ACPS"/>
    <property type="match status" value="1"/>
</dbReference>
<dbReference type="Pfam" id="PF18325">
    <property type="entry name" value="Fas_alpha_ACP"/>
    <property type="match status" value="1"/>
</dbReference>
<dbReference type="Pfam" id="PF18314">
    <property type="entry name" value="FAS_I_H"/>
    <property type="match status" value="1"/>
</dbReference>
<dbReference type="Pfam" id="PF00109">
    <property type="entry name" value="ketoacyl-synt"/>
    <property type="match status" value="1"/>
</dbReference>
<dbReference type="Pfam" id="PF02801">
    <property type="entry name" value="Ketoacyl-synt_C"/>
    <property type="match status" value="1"/>
</dbReference>
<dbReference type="PIRSF" id="PIRSF000454">
    <property type="entry name" value="FAS_yeast_alpha"/>
    <property type="match status" value="1"/>
</dbReference>
<dbReference type="SUPFAM" id="SSF56214">
    <property type="entry name" value="4'-phosphopantetheinyl transferase"/>
    <property type="match status" value="1"/>
</dbReference>
<dbReference type="SUPFAM" id="SSF52151">
    <property type="entry name" value="FabD/lysophospholipase-like"/>
    <property type="match status" value="1"/>
</dbReference>
<dbReference type="SUPFAM" id="SSF51735">
    <property type="entry name" value="NAD(P)-binding Rossmann-fold domains"/>
    <property type="match status" value="1"/>
</dbReference>
<dbReference type="SUPFAM" id="SSF53901">
    <property type="entry name" value="Thiolase-like"/>
    <property type="match status" value="2"/>
</dbReference>
<dbReference type="PROSITE" id="PS50075">
    <property type="entry name" value="CARRIER"/>
    <property type="match status" value="1"/>
</dbReference>
<dbReference type="PROSITE" id="PS00606">
    <property type="entry name" value="KS3_1"/>
    <property type="match status" value="1"/>
</dbReference>
<dbReference type="PROSITE" id="PS52004">
    <property type="entry name" value="KS3_2"/>
    <property type="match status" value="1"/>
</dbReference>
<dbReference type="PROSITE" id="PS00012">
    <property type="entry name" value="PHOSPHOPANTETHEINE"/>
    <property type="match status" value="1"/>
</dbReference>
<reference key="1">
    <citation type="journal article" date="1995" name="Gene">
        <title>Analysis and expression of the Candida albicans FAS2 gene.</title>
        <authorList>
            <person name="Southard S.B."/>
            <person name="Cihlar R.L."/>
        </authorList>
    </citation>
    <scope>NUCLEOTIDE SEQUENCE [GENOMIC DNA]</scope>
    <source>
        <strain>4918</strain>
    </source>
</reference>
<sequence>MKPEIEQELSHTLLTELLAYQFASPVRWIETQDVFLKQHNTERIIEIGPSPTLAGMANRTIKAKYESYDAALSLQRQVLCYSKDAKEIYYKPDPADLAPKETPKQEESTPSAPAAATPTPAAAAAPTPAPAPASAGPVESIPDEPVKANLLIHVLVAQKLKKPLDAVPMTKAIKDLVNGKSTVQNEILGDLGKEFGSTPEKPEDTPLEELAEQFQDSFSGQLGKTSTSLIGRLMSSKMPGGFSITTARKYLESRFGLGAGRQDSVLLMALTNEPANRLGSEADAKTFFDGIAQKYASSAGISLSSGAGSGAGAANSGGAVVDSAALDALTAENKKLAKQQLEVLARYLQSRLKQGSLKSFIKEKEASAVLQKELDLWEAEHGEFYAKGIQPTFSALKSRTYDSYWNWARQDVLSMYFDIIFGKLTSVDRETINQCIQIMNRANPTLIKFMQYHIDHCPEYKGETYKLAKRLGQQLIDNCKQVLTEDPVYKDVSRITGPKTKVSAKGNIEYEETQKDSVRKFEQYVYEMAQGGAMTKVSQPTIQEDLARVYKAISKQASKDSKLELQRVYEDLLKVVESSKEIETEQLTKDILQAATVPTTPTEEVDDPCTPSSDDEIASLPDKTSIIQPVSSTIPSQTIPFLHIQKKTKDGWEYNKKLSSLYLDGLESAAINGLTFKDKYVLVTGAGAGSIGAEILQGLISGGAKVIVTTSRFSKKVTEYYQNMYARYGAAGSTLIVVPFNQGSKQDVDALVQYIYDEPKKGGLGWDLDAIIPFAAIPENGNGLDNIDSKSEFAHRIMLTNLLRLLGAVKSKKPTDTRPAQCILPLSPNHGTFGFDGLYSESKISLETLFNRWYSEDWGSKLTVCGAVIGWTRGTGLMSANNIIAEGIEKLGVRTFSQKEMAFNILGLLTPEIVQLCQEEPVMADLNGGLQFIDNLKDFTSKLRTDLLETADIRRAVSIESAIEQKVVNGDNVDANYSKVMVEPRANMKFDFPTLKSYDEIKQIAPELEGMLDLENVVVVTGFAEVGPWGNSRTRWEMEAYGEFSLEGAIEMAWIMGFIKYHNGNLQGKPYSGWVDAKTQTPIDEKDIKSKYEEEILEHSGIRLIEPELFNGYDPKKKQMIQEIVVQHDLEPFECSKETAEQYKHEHGEKCEIFEIEESGEYTVRILKGATLYVPKALRFDRLVAGQIPTGWDARTYGIPEDTISQVDPITLYVLVATVEALLSAGITDPYEFYKYVHVSEVGNCSGSGMGGVSALRGMFKDRYADKPVQNDILQESFINTMSAWVNMLLLSSSGPIKTPVGACATAVESVDIGIETILSGKAKVVLVGGYDDFQEEGSYEFANMNATSNSIEEFKHGRTPKEMSRPTTTTRNGFMEAQGSGIQVIMTADLALKMGVPIHAVLAMTATATDKIGRSVPAPGKGILTTAREHHGNLKYPSPLLNIKYRKRQLNKRLEQIKSWEETELSYLQEEAELAKEEFGDEFSMHEFLKERTEEVYRESKRQVSDAKKQWGNSFYKSDPRIAPLRGALAAFNLTIDDIGVASFHGTSTVANDKNESATINNMMKHLGRSEGNPVFGVFQKYLTGHPKGAAGAWMLNGAIQILESGLVPGNRNADNVDKLLEQYEYVLYPSRSIQTDGIKAVSVTSFGFGQKGAQAVVVHPDYLFAVLDRSTYEEYATKVSARNKKTYRYMHNAITRNTMFVAKDKAPYSDELEQPVYLDPLARVEENKKKLVFSDKTIQSNQSYVGEVAQKTAKALSTLNKSSKGVGVDVELLSAINIDNETFIERNFTGNEVEYCLNTAHPQASFTGTWSAKEAVFKALGVESKGAGASLIDIEITRDVNGAPKVILHGEAKKAAAKAGVKNVNISISHDDFQATAVALSEF</sequence>
<evidence type="ECO:0000250" key="1"/>
<evidence type="ECO:0000255" key="2">
    <source>
        <dbReference type="PROSITE-ProRule" id="PRU00258"/>
    </source>
</evidence>
<evidence type="ECO:0000255" key="3">
    <source>
        <dbReference type="PROSITE-ProRule" id="PRU01348"/>
    </source>
</evidence>
<evidence type="ECO:0000256" key="4">
    <source>
        <dbReference type="SAM" id="MobiDB-lite"/>
    </source>
</evidence>
<evidence type="ECO:0000305" key="5"/>
<evidence type="ECO:0007829" key="6">
    <source>
        <dbReference type="PDB" id="6U5V"/>
    </source>
</evidence>
<evidence type="ECO:0007829" key="7">
    <source>
        <dbReference type="PDB" id="6U5W"/>
    </source>
</evidence>
<evidence type="ECO:0007829" key="8">
    <source>
        <dbReference type="PDB" id="7TUI"/>
    </source>
</evidence>
<name>FAS2_CANAX</name>
<gene>
    <name type="primary">FAS2</name>
</gene>
<accession>P43098</accession>
<feature type="chain" id="PRO_0000180284" description="Fatty acid synthase subunit alpha">
    <location>
        <begin position="1"/>
        <end position="1885"/>
    </location>
</feature>
<feature type="domain" description="Carrier" evidence="2">
    <location>
        <begin position="146"/>
        <end position="221"/>
    </location>
</feature>
<feature type="domain" description="Ketosynthase family 3 (KS3)" evidence="3">
    <location>
        <begin position="1121"/>
        <end position="1661"/>
    </location>
</feature>
<feature type="region of interest" description="Disordered" evidence="4">
    <location>
        <begin position="92"/>
        <end position="140"/>
    </location>
</feature>
<feature type="compositionally biased region" description="Basic and acidic residues" evidence="4">
    <location>
        <begin position="92"/>
        <end position="107"/>
    </location>
</feature>
<feature type="compositionally biased region" description="Low complexity" evidence="4">
    <location>
        <begin position="108"/>
        <end position="126"/>
    </location>
</feature>
<feature type="active site" description="For beta-ketoacyl synthase activity" evidence="3">
    <location>
        <position position="1304"/>
    </location>
</feature>
<feature type="active site" description="For beta-ketoacyl synthase activity" evidence="3">
    <location>
        <position position="1546"/>
    </location>
</feature>
<feature type="active site" description="For beta-ketoacyl synthase activity" evidence="3">
    <location>
        <position position="1587"/>
    </location>
</feature>
<feature type="binding site" evidence="1">
    <location>
        <begin position="1771"/>
        <end position="1773"/>
    </location>
    <ligand>
        <name>acetyl-CoA</name>
        <dbReference type="ChEBI" id="CHEBI:57288"/>
    </ligand>
</feature>
<feature type="binding site" evidence="1">
    <location>
        <position position="1771"/>
    </location>
    <ligand>
        <name>Mg(2+)</name>
        <dbReference type="ChEBI" id="CHEBI:18420"/>
    </ligand>
</feature>
<feature type="binding site" evidence="1">
    <location>
        <position position="1772"/>
    </location>
    <ligand>
        <name>Mg(2+)</name>
        <dbReference type="ChEBI" id="CHEBI:18420"/>
    </ligand>
</feature>
<feature type="binding site" evidence="1">
    <location>
        <position position="1773"/>
    </location>
    <ligand>
        <name>Mg(2+)</name>
        <dbReference type="ChEBI" id="CHEBI:18420"/>
    </ligand>
</feature>
<feature type="binding site" evidence="1">
    <location>
        <position position="1797"/>
    </location>
    <ligand>
        <name>acetyl-CoA</name>
        <dbReference type="ChEBI" id="CHEBI:57288"/>
    </ligand>
</feature>
<feature type="binding site" evidence="1">
    <location>
        <position position="1807"/>
    </location>
    <ligand>
        <name>acetyl-CoA</name>
        <dbReference type="ChEBI" id="CHEBI:57288"/>
    </ligand>
</feature>
<feature type="binding site" evidence="1">
    <location>
        <begin position="1816"/>
        <end position="1826"/>
    </location>
    <ligand>
        <name>acetyl-CoA</name>
        <dbReference type="ChEBI" id="CHEBI:57288"/>
    </ligand>
</feature>
<feature type="binding site" evidence="1">
    <location>
        <begin position="1840"/>
        <end position="1843"/>
    </location>
    <ligand>
        <name>acetyl-CoA</name>
        <dbReference type="ChEBI" id="CHEBI:57288"/>
    </ligand>
</feature>
<feature type="binding site" evidence="1">
    <location>
        <begin position="1870"/>
        <end position="1872"/>
    </location>
    <ligand>
        <name>acetyl-CoA</name>
        <dbReference type="ChEBI" id="CHEBI:57288"/>
    </ligand>
</feature>
<feature type="binding site" evidence="1">
    <location>
        <position position="1871"/>
    </location>
    <ligand>
        <name>Mg(2+)</name>
        <dbReference type="ChEBI" id="CHEBI:18420"/>
    </ligand>
</feature>
<feature type="binding site" evidence="1">
    <location>
        <position position="1872"/>
    </location>
    <ligand>
        <name>Mg(2+)</name>
        <dbReference type="ChEBI" id="CHEBI:18420"/>
    </ligand>
</feature>
<feature type="modified residue" description="O-(pantetheine 4'-phosphoryl)serine" evidence="2">
    <location>
        <position position="181"/>
    </location>
</feature>
<feature type="helix" evidence="8">
    <location>
        <begin position="3"/>
        <end position="20"/>
    </location>
</feature>
<feature type="helix" evidence="8">
    <location>
        <begin position="21"/>
        <end position="23"/>
    </location>
</feature>
<feature type="helix" evidence="8">
    <location>
        <begin position="29"/>
        <end position="36"/>
    </location>
</feature>
<feature type="strand" evidence="8">
    <location>
        <begin position="42"/>
        <end position="50"/>
    </location>
</feature>
<feature type="helix" evidence="8">
    <location>
        <begin position="54"/>
        <end position="64"/>
    </location>
</feature>
<feature type="helix" evidence="8">
    <location>
        <begin position="66"/>
        <end position="72"/>
    </location>
</feature>
<feature type="strand" evidence="8">
    <location>
        <begin position="77"/>
        <end position="83"/>
    </location>
</feature>
<feature type="helix" evidence="8">
    <location>
        <begin position="85"/>
        <end position="88"/>
    </location>
</feature>
<feature type="helix" evidence="6">
    <location>
        <begin position="148"/>
        <end position="160"/>
    </location>
</feature>
<feature type="helix" evidence="6">
    <location>
        <begin position="164"/>
        <end position="166"/>
    </location>
</feature>
<feature type="helix" evidence="6">
    <location>
        <begin position="173"/>
        <end position="177"/>
    </location>
</feature>
<feature type="helix" evidence="6">
    <location>
        <begin position="181"/>
        <end position="194"/>
    </location>
</feature>
<feature type="turn" evidence="6">
    <location>
        <begin position="202"/>
        <end position="204"/>
    </location>
</feature>
<feature type="helix" evidence="6">
    <location>
        <begin position="208"/>
        <end position="213"/>
    </location>
</feature>
<feature type="strand" evidence="6">
    <location>
        <begin position="215"/>
        <end position="217"/>
    </location>
</feature>
<feature type="helix" evidence="6">
    <location>
        <begin position="223"/>
        <end position="236"/>
    </location>
</feature>
<feature type="helix" evidence="6">
    <location>
        <begin position="244"/>
        <end position="251"/>
    </location>
</feature>
<feature type="helix" evidence="6">
    <location>
        <begin position="259"/>
        <end position="263"/>
    </location>
</feature>
<feature type="helix" evidence="6">
    <location>
        <begin position="267"/>
        <end position="271"/>
    </location>
</feature>
<feature type="helix" evidence="6">
    <location>
        <begin position="281"/>
        <end position="299"/>
    </location>
</feature>
<feature type="helix" evidence="8">
    <location>
        <begin position="326"/>
        <end position="347"/>
    </location>
</feature>
<feature type="helix" evidence="8">
    <location>
        <begin position="357"/>
        <end position="381"/>
    </location>
</feature>
<feature type="helix" evidence="8">
    <location>
        <begin position="383"/>
        <end position="388"/>
    </location>
</feature>
<feature type="helix" evidence="8">
    <location>
        <begin position="395"/>
        <end position="397"/>
    </location>
</feature>
<feature type="strand" evidence="8">
    <location>
        <begin position="399"/>
        <end position="401"/>
    </location>
</feature>
<feature type="helix" evidence="8">
    <location>
        <begin position="404"/>
        <end position="420"/>
    </location>
</feature>
<feature type="helix" evidence="8">
    <location>
        <begin position="429"/>
        <end position="439"/>
    </location>
</feature>
<feature type="helix" evidence="8">
    <location>
        <begin position="444"/>
        <end position="455"/>
    </location>
</feature>
<feature type="helix" evidence="8">
    <location>
        <begin position="459"/>
        <end position="461"/>
    </location>
</feature>
<feature type="helix" evidence="8">
    <location>
        <begin position="463"/>
        <end position="482"/>
    </location>
</feature>
<feature type="strand" evidence="8">
    <location>
        <begin position="496"/>
        <end position="502"/>
    </location>
</feature>
<feature type="strand" evidence="7">
    <location>
        <begin position="504"/>
        <end position="506"/>
    </location>
</feature>
<feature type="strand" evidence="8">
    <location>
        <begin position="508"/>
        <end position="514"/>
    </location>
</feature>
<feature type="helix" evidence="8">
    <location>
        <begin position="521"/>
        <end position="529"/>
    </location>
</feature>
<feature type="turn" evidence="8">
    <location>
        <begin position="580"/>
        <end position="582"/>
    </location>
</feature>
<feature type="helix" evidence="8">
    <location>
        <begin position="630"/>
        <end position="632"/>
    </location>
</feature>
<feature type="strand" evidence="8">
    <location>
        <begin position="641"/>
        <end position="648"/>
    </location>
</feature>
<feature type="strand" evidence="8">
    <location>
        <begin position="651"/>
        <end position="654"/>
    </location>
</feature>
<feature type="helix" evidence="8">
    <location>
        <begin position="656"/>
        <end position="671"/>
    </location>
</feature>
<feature type="strand" evidence="8">
    <location>
        <begin position="680"/>
        <end position="685"/>
    </location>
</feature>
<feature type="helix" evidence="8">
    <location>
        <begin position="691"/>
        <end position="701"/>
    </location>
</feature>
<feature type="strand" evidence="8">
    <location>
        <begin position="705"/>
        <end position="712"/>
    </location>
</feature>
<feature type="helix" evidence="8">
    <location>
        <begin position="715"/>
        <end position="728"/>
    </location>
</feature>
<feature type="strand" evidence="8">
    <location>
        <begin position="734"/>
        <end position="739"/>
    </location>
</feature>
<feature type="helix" evidence="8">
    <location>
        <begin position="745"/>
        <end position="756"/>
    </location>
</feature>
<feature type="helix" evidence="8">
    <location>
        <begin position="759"/>
        <end position="761"/>
    </location>
</feature>
<feature type="strand" evidence="8">
    <location>
        <begin position="769"/>
        <end position="773"/>
    </location>
</feature>
<feature type="helix" evidence="7">
    <location>
        <begin position="784"/>
        <end position="786"/>
    </location>
</feature>
<feature type="helix" evidence="8">
    <location>
        <begin position="789"/>
        <end position="798"/>
    </location>
</feature>
<feature type="turn" evidence="8">
    <location>
        <begin position="799"/>
        <end position="801"/>
    </location>
</feature>
<feature type="helix" evidence="8">
    <location>
        <begin position="802"/>
        <end position="812"/>
    </location>
</feature>
<feature type="strand" evidence="8">
    <location>
        <begin position="816"/>
        <end position="818"/>
    </location>
</feature>
<feature type="strand" evidence="8">
    <location>
        <begin position="820"/>
        <end position="826"/>
    </location>
</feature>
<feature type="strand" evidence="6">
    <location>
        <begin position="830"/>
        <end position="834"/>
    </location>
</feature>
<feature type="helix" evidence="8">
    <location>
        <begin position="839"/>
        <end position="844"/>
    </location>
</feature>
<feature type="helix" evidence="8">
    <location>
        <begin position="845"/>
        <end position="848"/>
    </location>
</feature>
<feature type="helix" evidence="8">
    <location>
        <begin position="849"/>
        <end position="855"/>
    </location>
</feature>
<feature type="turn" evidence="8">
    <location>
        <begin position="859"/>
        <end position="861"/>
    </location>
</feature>
<feature type="strand" evidence="8">
    <location>
        <begin position="862"/>
        <end position="868"/>
    </location>
</feature>
<feature type="turn" evidence="8">
    <location>
        <begin position="877"/>
        <end position="881"/>
    </location>
</feature>
<feature type="helix" evidence="8">
    <location>
        <begin position="882"/>
        <end position="884"/>
    </location>
</feature>
<feature type="helix" evidence="8">
    <location>
        <begin position="885"/>
        <end position="889"/>
    </location>
</feature>
<feature type="turn" evidence="8">
    <location>
        <begin position="890"/>
        <end position="892"/>
    </location>
</feature>
<feature type="helix" evidence="8">
    <location>
        <begin position="898"/>
        <end position="906"/>
    </location>
</feature>
<feature type="helix" evidence="8">
    <location>
        <begin position="907"/>
        <end position="909"/>
    </location>
</feature>
<feature type="helix" evidence="8">
    <location>
        <begin position="911"/>
        <end position="917"/>
    </location>
</feature>
<feature type="strand" evidence="8">
    <location>
        <begin position="922"/>
        <end position="925"/>
    </location>
</feature>
<feature type="helix" evidence="8">
    <location>
        <begin position="930"/>
        <end position="932"/>
    </location>
</feature>
<feature type="helix" evidence="8">
    <location>
        <begin position="936"/>
        <end position="973"/>
    </location>
</feature>
<feature type="helix" evidence="8">
    <location>
        <begin position="974"/>
        <end position="977"/>
    </location>
</feature>
<feature type="helix" evidence="8">
    <location>
        <begin position="998"/>
        <end position="1004"/>
    </location>
</feature>
<feature type="turn" evidence="7">
    <location>
        <begin position="1009"/>
        <end position="1011"/>
    </location>
</feature>
<feature type="helix" evidence="6">
    <location>
        <begin position="1014"/>
        <end position="1016"/>
    </location>
</feature>
<feature type="strand" evidence="8">
    <location>
        <begin position="1018"/>
        <end position="1027"/>
    </location>
</feature>
<feature type="helix" evidence="8">
    <location>
        <begin position="1032"/>
        <end position="1040"/>
    </location>
</feature>
<feature type="helix" evidence="8">
    <location>
        <begin position="1046"/>
        <end position="1055"/>
    </location>
</feature>
<feature type="strand" evidence="8">
    <location>
        <begin position="1058"/>
        <end position="1066"/>
    </location>
</feature>
<feature type="strand" evidence="8">
    <location>
        <begin position="1069"/>
        <end position="1079"/>
    </location>
</feature>
<feature type="helix" evidence="8">
    <location>
        <begin position="1085"/>
        <end position="1098"/>
    </location>
</feature>
<feature type="strand" evidence="8">
    <location>
        <begin position="1100"/>
        <end position="1104"/>
    </location>
</feature>
<feature type="helix" evidence="8">
    <location>
        <begin position="1107"/>
        <end position="1109"/>
    </location>
</feature>
<feature type="turn" evidence="8">
    <location>
        <begin position="1110"/>
        <end position="1112"/>
    </location>
</feature>
<feature type="helix" evidence="8">
    <location>
        <begin position="1115"/>
        <end position="1117"/>
    </location>
</feature>
<feature type="strand" evidence="8">
    <location>
        <begin position="1118"/>
        <end position="1125"/>
    </location>
</feature>
<feature type="strand" evidence="8">
    <location>
        <begin position="1133"/>
        <end position="1135"/>
    </location>
</feature>
<feature type="helix" evidence="8">
    <location>
        <begin position="1137"/>
        <end position="1147"/>
    </location>
</feature>
<feature type="helix" evidence="8">
    <location>
        <begin position="1148"/>
        <end position="1150"/>
    </location>
</feature>
<feature type="strand" evidence="8">
    <location>
        <begin position="1151"/>
        <end position="1155"/>
    </location>
</feature>
<feature type="turn" evidence="8">
    <location>
        <begin position="1157"/>
        <end position="1159"/>
    </location>
</feature>
<feature type="strand" evidence="8">
    <location>
        <begin position="1162"/>
        <end position="1166"/>
    </location>
</feature>
<feature type="strand" evidence="8">
    <location>
        <begin position="1171"/>
        <end position="1178"/>
    </location>
</feature>
<feature type="strand" evidence="8">
    <location>
        <begin position="1184"/>
        <end position="1188"/>
    </location>
</feature>
<feature type="turn" evidence="8">
    <location>
        <begin position="1195"/>
        <end position="1198"/>
    </location>
</feature>
<feature type="helix" evidence="8">
    <location>
        <begin position="1201"/>
        <end position="1206"/>
    </location>
</feature>
<feature type="helix" evidence="8">
    <location>
        <begin position="1209"/>
        <end position="1224"/>
    </location>
</feature>
<feature type="helix" evidence="8">
    <location>
        <begin position="1230"/>
        <end position="1235"/>
    </location>
</feature>
<feature type="helix" evidence="8">
    <location>
        <begin position="1239"/>
        <end position="1241"/>
    </location>
</feature>
<feature type="strand" evidence="8">
    <location>
        <begin position="1242"/>
        <end position="1244"/>
    </location>
</feature>
<feature type="helix" evidence="8">
    <location>
        <begin position="1253"/>
        <end position="1260"/>
    </location>
</feature>
<feature type="turn" evidence="8">
    <location>
        <begin position="1261"/>
        <end position="1266"/>
    </location>
</feature>
<feature type="helix" evidence="8">
    <location>
        <begin position="1273"/>
        <end position="1276"/>
    </location>
</feature>
<feature type="strand" evidence="6">
    <location>
        <begin position="1277"/>
        <end position="1279"/>
    </location>
</feature>
<feature type="helix" evidence="8">
    <location>
        <begin position="1281"/>
        <end position="1289"/>
    </location>
</feature>
<feature type="helix" evidence="8">
    <location>
        <begin position="1303"/>
        <end position="1305"/>
    </location>
</feature>
<feature type="helix" evidence="8">
    <location>
        <begin position="1309"/>
        <end position="1319"/>
    </location>
</feature>
<feature type="strand" evidence="8">
    <location>
        <begin position="1324"/>
        <end position="1332"/>
    </location>
</feature>
<feature type="helix" evidence="8">
    <location>
        <begin position="1336"/>
        <end position="1344"/>
    </location>
</feature>
<feature type="helix" evidence="8">
    <location>
        <begin position="1351"/>
        <end position="1356"/>
    </location>
</feature>
<feature type="helix" evidence="6">
    <location>
        <begin position="1361"/>
        <end position="1363"/>
    </location>
</feature>
<feature type="strand" evidence="8">
    <location>
        <begin position="1380"/>
        <end position="1388"/>
    </location>
</feature>
<feature type="helix" evidence="8">
    <location>
        <begin position="1389"/>
        <end position="1395"/>
    </location>
</feature>
<feature type="strand" evidence="8">
    <location>
        <begin position="1401"/>
        <end position="1409"/>
    </location>
</feature>
<feature type="strand" evidence="6">
    <location>
        <begin position="1417"/>
        <end position="1419"/>
    </location>
</feature>
<feature type="helix" evidence="8">
    <location>
        <begin position="1423"/>
        <end position="1428"/>
    </location>
</feature>
<feature type="helix" evidence="8">
    <location>
        <begin position="1440"/>
        <end position="1442"/>
    </location>
</feature>
<feature type="helix" evidence="8">
    <location>
        <begin position="1444"/>
        <end position="1476"/>
    </location>
</feature>
<feature type="turn" evidence="8">
    <location>
        <begin position="1477"/>
        <end position="1479"/>
    </location>
</feature>
<feature type="helix" evidence="8">
    <location>
        <begin position="1486"/>
        <end position="1512"/>
    </location>
</feature>
<feature type="turn" evidence="8">
    <location>
        <begin position="1516"/>
        <end position="1519"/>
    </location>
</feature>
<feature type="strand" evidence="7">
    <location>
        <begin position="1521"/>
        <end position="1523"/>
    </location>
</feature>
<feature type="helix" evidence="8">
    <location>
        <begin position="1525"/>
        <end position="1531"/>
    </location>
</feature>
<feature type="turn" evidence="8">
    <location>
        <begin position="1532"/>
        <end position="1534"/>
    </location>
</feature>
<feature type="helix" evidence="8">
    <location>
        <begin position="1537"/>
        <end position="1539"/>
    </location>
</feature>
<feature type="strand" evidence="8">
    <location>
        <begin position="1540"/>
        <end position="1544"/>
    </location>
</feature>
<feature type="helix" evidence="8">
    <location>
        <begin position="1551"/>
        <end position="1567"/>
    </location>
</feature>
<feature type="strand" evidence="8">
    <location>
        <begin position="1576"/>
        <end position="1579"/>
    </location>
</feature>
<feature type="helix" evidence="8">
    <location>
        <begin position="1582"/>
        <end position="1585"/>
    </location>
</feature>
<feature type="turn" evidence="8">
    <location>
        <begin position="1589"/>
        <end position="1591"/>
    </location>
</feature>
<feature type="helix" evidence="8">
    <location>
        <begin position="1592"/>
        <end position="1606"/>
    </location>
</feature>
<feature type="strand" evidence="8">
    <location>
        <begin position="1616"/>
        <end position="1618"/>
    </location>
</feature>
<feature type="helix" evidence="8">
    <location>
        <begin position="1620"/>
        <end position="1622"/>
    </location>
</feature>
<feature type="strand" evidence="8">
    <location>
        <begin position="1642"/>
        <end position="1649"/>
    </location>
</feature>
<feature type="turn" evidence="8">
    <location>
        <begin position="1650"/>
        <end position="1652"/>
    </location>
</feature>
<feature type="strand" evidence="8">
    <location>
        <begin position="1653"/>
        <end position="1660"/>
    </location>
</feature>
<feature type="helix" evidence="8">
    <location>
        <begin position="1662"/>
        <end position="1664"/>
    </location>
</feature>
<feature type="turn" evidence="8">
    <location>
        <begin position="1665"/>
        <end position="1667"/>
    </location>
</feature>
<feature type="helix" evidence="8">
    <location>
        <begin position="1671"/>
        <end position="1698"/>
    </location>
</feature>
<feature type="turn" evidence="8">
    <location>
        <begin position="1712"/>
        <end position="1714"/>
    </location>
</feature>
<feature type="helix" evidence="8">
    <location>
        <begin position="1715"/>
        <end position="1719"/>
    </location>
</feature>
<feature type="strand" evidence="8">
    <location>
        <begin position="1727"/>
        <end position="1729"/>
    </location>
</feature>
<feature type="strand" evidence="8">
    <location>
        <begin position="1732"/>
        <end position="1734"/>
    </location>
</feature>
<feature type="helix" evidence="8">
    <location>
        <begin position="1737"/>
        <end position="1739"/>
    </location>
</feature>
<feature type="strand" evidence="8">
    <location>
        <begin position="1743"/>
        <end position="1745"/>
    </location>
</feature>
<keyword id="KW-0002">3D-structure</keyword>
<keyword id="KW-0275">Fatty acid biosynthesis</keyword>
<keyword id="KW-0276">Fatty acid metabolism</keyword>
<keyword id="KW-0444">Lipid biosynthesis</keyword>
<keyword id="KW-0443">Lipid metabolism</keyword>
<keyword id="KW-0460">Magnesium</keyword>
<keyword id="KW-0479">Metal-binding</keyword>
<keyword id="KW-0511">Multifunctional enzyme</keyword>
<keyword id="KW-0520">NAD</keyword>
<keyword id="KW-0521">NADP</keyword>
<keyword id="KW-0560">Oxidoreductase</keyword>
<keyword id="KW-0596">Phosphopantetheine</keyword>
<keyword id="KW-0597">Phosphoprotein</keyword>
<keyword id="KW-0808">Transferase</keyword>
<proteinExistence type="evidence at protein level"/>
<organism>
    <name type="scientific">Candida albicans</name>
    <name type="common">Yeast</name>
    <dbReference type="NCBI Taxonomy" id="5476"/>
    <lineage>
        <taxon>Eukaryota</taxon>
        <taxon>Fungi</taxon>
        <taxon>Dikarya</taxon>
        <taxon>Ascomycota</taxon>
        <taxon>Saccharomycotina</taxon>
        <taxon>Pichiomycetes</taxon>
        <taxon>Debaryomycetaceae</taxon>
        <taxon>Candida/Lodderomyces clade</taxon>
        <taxon>Candida</taxon>
    </lineage>
</organism>
<comment type="function">
    <text>Fatty acid synthetase catalyzes the formation of long-chain fatty acids from acetyl-CoA, malonyl-CoA and NADPH. The alpha subunit contains domains for: acyl carrier protein, 3-oxoacyl-[acyl-carrier-protein] reductase, and 3-oxoacyl-[acyl-carrier-protein] synthase.</text>
</comment>
<comment type="catalytic activity">
    <reaction>
        <text>acetyl-CoA + n malonyl-CoA + 2n NADPH + 4n H(+) = a long-chain-acyl-CoA + n CoA + n CO2 + 2n NADP(+).</text>
        <dbReference type="EC" id="2.3.1.86"/>
    </reaction>
</comment>
<comment type="catalytic activity">
    <reaction>
        <text>a fatty acyl-[ACP] + malonyl-[ACP] + H(+) = a 3-oxoacyl-[ACP] + holo-[ACP] + CO2</text>
        <dbReference type="Rhea" id="RHEA:22836"/>
        <dbReference type="Rhea" id="RHEA-COMP:9623"/>
        <dbReference type="Rhea" id="RHEA-COMP:9685"/>
        <dbReference type="Rhea" id="RHEA-COMP:9916"/>
        <dbReference type="Rhea" id="RHEA-COMP:14125"/>
        <dbReference type="ChEBI" id="CHEBI:15378"/>
        <dbReference type="ChEBI" id="CHEBI:16526"/>
        <dbReference type="ChEBI" id="CHEBI:64479"/>
        <dbReference type="ChEBI" id="CHEBI:78449"/>
        <dbReference type="ChEBI" id="CHEBI:78776"/>
        <dbReference type="ChEBI" id="CHEBI:138651"/>
        <dbReference type="EC" id="2.3.1.41"/>
    </reaction>
</comment>
<comment type="catalytic activity">
    <reaction>
        <text>a (3R)-hydroxyacyl-[ACP] + NADP(+) = a 3-oxoacyl-[ACP] + NADPH + H(+)</text>
        <dbReference type="Rhea" id="RHEA:17397"/>
        <dbReference type="Rhea" id="RHEA-COMP:9916"/>
        <dbReference type="Rhea" id="RHEA-COMP:9945"/>
        <dbReference type="ChEBI" id="CHEBI:15378"/>
        <dbReference type="ChEBI" id="CHEBI:57783"/>
        <dbReference type="ChEBI" id="CHEBI:58349"/>
        <dbReference type="ChEBI" id="CHEBI:78776"/>
        <dbReference type="ChEBI" id="CHEBI:78827"/>
        <dbReference type="EC" id="1.1.1.100"/>
    </reaction>
</comment>
<comment type="subunit">
    <text>[Alpha(6)beta(6)] hexamers of two multifunctional subunits (alpha and beta).</text>
</comment>
<comment type="similarity">
    <text evidence="5">Belongs to the thiolase-like superfamily. Fungal fatty acid synthetase subunit alpha family.</text>
</comment>